<sequence>MPYFTRLILFLFCLMVLVESRKPKRKRWTGQVEMPKPSHLYKKNLDVTKIRKGKPQQLLRVDEHDFSMRPAFGGPAIPVGVDVQVESLDSISEVDMDFTMTLYLRHYWKDERLAFSSASNKSMTFDGRLVKKIWVPDVFFVHSKRSFTHDTTTDNIMLRVFPDGHVLYSMRITVTAMCNMDFSHFPLDSQTCSLELESYAYTDEDLMLYWKNGDESLKTDEKISLSQFLIQKFHTTSRLAFYSSTGWYNRLYINFTLRRHIFFFLLQTYFPATLMVMLSWVSFWIDRRAVPARVSLGITTVLTMTTIITGVNASMPRVSYVKAVDIYLWVSFVFVFLSVLEYAAVNYLTTVQERKERKLREKFPCMCGMLHSKTMMLDGSYSESEANSLAGYPRSHILTEEERQDKIVVHLGLSGEANAARKKGLLKGQTGFRIFQNTHAIDKYSRLIFPASYIFFNLIYWSVFS</sequence>
<feature type="signal peptide" evidence="5">
    <location>
        <begin position="1"/>
        <end position="20"/>
    </location>
</feature>
<feature type="chain" id="PRO_0000000488" description="Gamma-aminobutyric acid receptor subunit rho-2" evidence="5">
    <location>
        <begin position="21"/>
        <end position="465"/>
    </location>
</feature>
<feature type="topological domain" description="Extracellular" evidence="7">
    <location>
        <begin position="21"/>
        <end position="260"/>
    </location>
</feature>
<feature type="transmembrane region" description="Helical" evidence="5">
    <location>
        <begin position="261"/>
        <end position="281"/>
    </location>
</feature>
<feature type="topological domain" description="Cytoplasmic" evidence="7">
    <location>
        <begin position="282"/>
        <end position="293"/>
    </location>
</feature>
<feature type="transmembrane region" description="Helical" evidence="5">
    <location>
        <begin position="294"/>
        <end position="314"/>
    </location>
</feature>
<feature type="topological domain" description="Extracellular" evidence="7">
    <location>
        <begin position="315"/>
        <end position="325"/>
    </location>
</feature>
<feature type="transmembrane region" description="Helical" evidence="5">
    <location>
        <begin position="326"/>
        <end position="346"/>
    </location>
</feature>
<feature type="topological domain" description="Cytoplasmic" evidence="7">
    <location>
        <begin position="347"/>
        <end position="443"/>
    </location>
</feature>
<feature type="transmembrane region" description="Helical" evidence="5">
    <location>
        <begin position="444"/>
        <end position="464"/>
    </location>
</feature>
<feature type="topological domain" description="Extracellular" evidence="7">
    <location>
        <position position="465"/>
    </location>
</feature>
<feature type="binding site" description="in chain A" evidence="1">
    <location>
        <position position="105"/>
    </location>
    <ligand>
        <name>4-aminobutanoate</name>
        <dbReference type="ChEBI" id="CHEBI:59888"/>
        <note>ligand shared between two neighboring rho subunits</note>
    </ligand>
</feature>
<feature type="binding site" description="in chain A" evidence="1">
    <location>
        <position position="169"/>
    </location>
    <ligand>
        <name>4-aminobutanoate</name>
        <dbReference type="ChEBI" id="CHEBI:59888"/>
        <note>ligand shared between two neighboring rho subunits</note>
    </ligand>
</feature>
<feature type="binding site" description="in chain B" evidence="1">
    <location>
        <position position="197"/>
    </location>
    <ligand>
        <name>4-aminobutanoate</name>
        <dbReference type="ChEBI" id="CHEBI:59888"/>
        <note>ligand shared between two neighboring rho subunits</note>
    </ligand>
</feature>
<feature type="glycosylation site" description="N-linked (GlcNAc...) asparagine" evidence="5">
    <location>
        <position position="120"/>
    </location>
</feature>
<feature type="glycosylation site" description="N-linked (GlcNAc...) asparagine" evidence="5">
    <location>
        <position position="254"/>
    </location>
</feature>
<feature type="disulfide bond" evidence="2">
    <location>
        <begin position="178"/>
        <end position="192"/>
    </location>
</feature>
<feature type="splice variant" id="VSP_044373" description="In isoform 2." evidence="7">
    <original>M</original>
    <variation>MVKPGGICSATGYWKAAFCLTDVHKM</variation>
    <location>
        <position position="1"/>
    </location>
</feature>
<feature type="sequence conflict" description="In Ref. 1; AAA52510." evidence="7" ref="1">
    <original>Y</original>
    <variation>H</variation>
    <location>
        <position position="209"/>
    </location>
</feature>
<keyword id="KW-0024">Alternative initiation</keyword>
<keyword id="KW-1003">Cell membrane</keyword>
<keyword id="KW-0868">Chloride</keyword>
<keyword id="KW-0869">Chloride channel</keyword>
<keyword id="KW-1015">Disulfide bond</keyword>
<keyword id="KW-0325">Glycoprotein</keyword>
<keyword id="KW-0407">Ion channel</keyword>
<keyword id="KW-0406">Ion transport</keyword>
<keyword id="KW-0472">Membrane</keyword>
<keyword id="KW-0628">Postsynaptic cell membrane</keyword>
<keyword id="KW-1185">Reference proteome</keyword>
<keyword id="KW-0732">Signal</keyword>
<keyword id="KW-0770">Synapse</keyword>
<keyword id="KW-0812">Transmembrane</keyword>
<keyword id="KW-1133">Transmembrane helix</keyword>
<keyword id="KW-0813">Transport</keyword>
<dbReference type="EMBL" id="M86868">
    <property type="protein sequence ID" value="AAA52510.1"/>
    <property type="molecule type" value="mRNA"/>
</dbReference>
<dbReference type="EMBL" id="AL121833">
    <property type="status" value="NOT_ANNOTATED_CDS"/>
    <property type="molecule type" value="Genomic_DNA"/>
</dbReference>
<dbReference type="EMBL" id="BC130352">
    <property type="protein sequence ID" value="AAI30353.1"/>
    <property type="molecule type" value="mRNA"/>
</dbReference>
<dbReference type="EMBL" id="BC130354">
    <property type="protein sequence ID" value="AAI30355.1"/>
    <property type="molecule type" value="mRNA"/>
</dbReference>
<dbReference type="CCDS" id="CCDS5020.3">
    <molecule id="P28476-1"/>
</dbReference>
<dbReference type="PIR" id="A38079">
    <property type="entry name" value="A38079"/>
</dbReference>
<dbReference type="RefSeq" id="NP_002034.3">
    <molecule id="P28476-1"/>
    <property type="nucleotide sequence ID" value="NM_002043.5"/>
</dbReference>
<dbReference type="SMR" id="P28476"/>
<dbReference type="FunCoup" id="P28476">
    <property type="interactions" value="519"/>
</dbReference>
<dbReference type="STRING" id="9606.ENSP00000386029"/>
<dbReference type="BindingDB" id="P28476"/>
<dbReference type="ChEMBL" id="CHEMBL2375"/>
<dbReference type="DrugBank" id="DB01567">
    <property type="generic name" value="Fludiazepam"/>
</dbReference>
<dbReference type="DrugBank" id="DB16754">
    <property type="generic name" value="TPMPA"/>
</dbReference>
<dbReference type="DrugCentral" id="P28476"/>
<dbReference type="GlyCosmos" id="P28476">
    <property type="glycosylation" value="2 sites, No reported glycans"/>
</dbReference>
<dbReference type="GlyGen" id="P28476">
    <property type="glycosylation" value="2 sites"/>
</dbReference>
<dbReference type="iPTMnet" id="P28476"/>
<dbReference type="PhosphoSitePlus" id="P28476"/>
<dbReference type="BioMuta" id="GABRR2"/>
<dbReference type="DMDM" id="410516956"/>
<dbReference type="PaxDb" id="9606-ENSP00000386029"/>
<dbReference type="ProteomicsDB" id="54487">
    <molecule id="P28476-1"/>
</dbReference>
<dbReference type="Antibodypedia" id="18718">
    <property type="antibodies" value="119 antibodies from 24 providers"/>
</dbReference>
<dbReference type="DNASU" id="2570"/>
<dbReference type="Ensembl" id="ENST00000402938.4">
    <molecule id="P28476-1"/>
    <property type="protein sequence ID" value="ENSP00000386029.4"/>
    <property type="gene ID" value="ENSG00000111886.11"/>
</dbReference>
<dbReference type="GeneID" id="2570"/>
<dbReference type="KEGG" id="hsa:2570"/>
<dbReference type="MANE-Select" id="ENST00000402938.4">
    <property type="protein sequence ID" value="ENSP00000386029.4"/>
    <property type="RefSeq nucleotide sequence ID" value="NM_002043.5"/>
    <property type="RefSeq protein sequence ID" value="NP_002034.3"/>
</dbReference>
<dbReference type="UCSC" id="uc003pnb.4">
    <molecule id="P28476-1"/>
    <property type="organism name" value="human"/>
</dbReference>
<dbReference type="AGR" id="HGNC:4091"/>
<dbReference type="CTD" id="2570"/>
<dbReference type="DisGeNET" id="2570"/>
<dbReference type="GeneCards" id="GABRR2"/>
<dbReference type="HGNC" id="HGNC:4091">
    <property type="gene designation" value="GABRR2"/>
</dbReference>
<dbReference type="HPA" id="ENSG00000111886">
    <property type="expression patterns" value="Tissue enriched (retina)"/>
</dbReference>
<dbReference type="MIM" id="137162">
    <property type="type" value="gene"/>
</dbReference>
<dbReference type="neXtProt" id="NX_P28476"/>
<dbReference type="OpenTargets" id="ENSG00000111886"/>
<dbReference type="PharmGKB" id="PA28506"/>
<dbReference type="VEuPathDB" id="HostDB:ENSG00000111886"/>
<dbReference type="eggNOG" id="KOG3643">
    <property type="taxonomic scope" value="Eukaryota"/>
</dbReference>
<dbReference type="GeneTree" id="ENSGT00940000156864"/>
<dbReference type="HOGENOM" id="CLU_010920_0_1_1"/>
<dbReference type="InParanoid" id="P28476"/>
<dbReference type="OMA" id="KRWTGHL"/>
<dbReference type="OrthoDB" id="442503at2759"/>
<dbReference type="PAN-GO" id="P28476">
    <property type="GO annotations" value="13 GO annotations based on evolutionary models"/>
</dbReference>
<dbReference type="TreeFam" id="TF315453"/>
<dbReference type="PathwayCommons" id="P28476"/>
<dbReference type="Reactome" id="R-HSA-977443">
    <property type="pathway name" value="GABA receptor activation"/>
</dbReference>
<dbReference type="SignaLink" id="P28476"/>
<dbReference type="BioGRID-ORCS" id="2570">
    <property type="hits" value="9 hits in 1156 CRISPR screens"/>
</dbReference>
<dbReference type="ChiTaRS" id="GABRR2">
    <property type="organism name" value="human"/>
</dbReference>
<dbReference type="GeneWiki" id="GABRR2"/>
<dbReference type="GenomeRNAi" id="2570"/>
<dbReference type="Pharos" id="P28476">
    <property type="development level" value="Tchem"/>
</dbReference>
<dbReference type="PRO" id="PR:P28476"/>
<dbReference type="Proteomes" id="UP000005640">
    <property type="component" value="Chromosome 6"/>
</dbReference>
<dbReference type="RNAct" id="P28476">
    <property type="molecule type" value="protein"/>
</dbReference>
<dbReference type="Bgee" id="ENSG00000111886">
    <property type="expression patterns" value="Expressed in vena cava and 132 other cell types or tissues"/>
</dbReference>
<dbReference type="GO" id="GO:0034707">
    <property type="term" value="C:chloride channel complex"/>
    <property type="evidence" value="ECO:0007669"/>
    <property type="project" value="UniProtKB-KW"/>
</dbReference>
<dbReference type="GO" id="GO:1902711">
    <property type="term" value="C:GABA-A receptor complex"/>
    <property type="evidence" value="ECO:0000318"/>
    <property type="project" value="GO_Central"/>
</dbReference>
<dbReference type="GO" id="GO:0098982">
    <property type="term" value="C:GABA-ergic synapse"/>
    <property type="evidence" value="ECO:0007669"/>
    <property type="project" value="Ensembl"/>
</dbReference>
<dbReference type="GO" id="GO:0097708">
    <property type="term" value="C:intracellular vesicle"/>
    <property type="evidence" value="ECO:0007669"/>
    <property type="project" value="Ensembl"/>
</dbReference>
<dbReference type="GO" id="GO:0005886">
    <property type="term" value="C:plasma membrane"/>
    <property type="evidence" value="ECO:0000304"/>
    <property type="project" value="Reactome"/>
</dbReference>
<dbReference type="GO" id="GO:0045211">
    <property type="term" value="C:postsynaptic membrane"/>
    <property type="evidence" value="ECO:0007669"/>
    <property type="project" value="UniProtKB-SubCell"/>
</dbReference>
<dbReference type="GO" id="GO:0004890">
    <property type="term" value="F:GABA-A receptor activity"/>
    <property type="evidence" value="ECO:0000250"/>
    <property type="project" value="UniProtKB"/>
</dbReference>
<dbReference type="GO" id="GO:0022851">
    <property type="term" value="F:GABA-gated chloride ion channel activity"/>
    <property type="evidence" value="ECO:0000250"/>
    <property type="project" value="UniProtKB"/>
</dbReference>
<dbReference type="GO" id="GO:0019904">
    <property type="term" value="F:protein domain specific binding"/>
    <property type="evidence" value="ECO:0007669"/>
    <property type="project" value="Ensembl"/>
</dbReference>
<dbReference type="GO" id="GO:1904315">
    <property type="term" value="F:transmitter-gated monoatomic ion channel activity involved in regulation of postsynaptic membrane potential"/>
    <property type="evidence" value="ECO:0007669"/>
    <property type="project" value="Ensembl"/>
</dbReference>
<dbReference type="GO" id="GO:0007268">
    <property type="term" value="P:chemical synaptic transmission"/>
    <property type="evidence" value="ECO:0000304"/>
    <property type="project" value="ProtInc"/>
</dbReference>
<dbReference type="GO" id="GO:1902476">
    <property type="term" value="P:chloride transmembrane transport"/>
    <property type="evidence" value="ECO:0000318"/>
    <property type="project" value="GO_Central"/>
</dbReference>
<dbReference type="GO" id="GO:0007214">
    <property type="term" value="P:gamma-aminobutyric acid signaling pathway"/>
    <property type="evidence" value="ECO:0007669"/>
    <property type="project" value="Ensembl"/>
</dbReference>
<dbReference type="GO" id="GO:0007165">
    <property type="term" value="P:signal transduction"/>
    <property type="evidence" value="ECO:0000304"/>
    <property type="project" value="ProtInc"/>
</dbReference>
<dbReference type="GO" id="GO:0007601">
    <property type="term" value="P:visual perception"/>
    <property type="evidence" value="ECO:0007669"/>
    <property type="project" value="Ensembl"/>
</dbReference>
<dbReference type="CDD" id="cd19005">
    <property type="entry name" value="LGIC_ECD_GABAAR_rho"/>
    <property type="match status" value="1"/>
</dbReference>
<dbReference type="CDD" id="cd19059">
    <property type="entry name" value="LGIC_TM_GABAAR_rho"/>
    <property type="match status" value="1"/>
</dbReference>
<dbReference type="FunFam" id="2.70.170.10:FF:000007">
    <property type="entry name" value="Gamma-aminobutyric acid type A receptor rho2 subunit"/>
    <property type="match status" value="1"/>
</dbReference>
<dbReference type="FunFam" id="1.20.58.390:FF:000005">
    <property type="entry name" value="Putative gamma-aminobutyric acid receptor subunit rho-2-like"/>
    <property type="match status" value="1"/>
</dbReference>
<dbReference type="Gene3D" id="2.70.170.10">
    <property type="entry name" value="Neurotransmitter-gated ion-channel ligand-binding domain"/>
    <property type="match status" value="1"/>
</dbReference>
<dbReference type="Gene3D" id="1.20.58.390">
    <property type="entry name" value="Neurotransmitter-gated ion-channel transmembrane domain"/>
    <property type="match status" value="1"/>
</dbReference>
<dbReference type="InterPro" id="IPR006028">
    <property type="entry name" value="GABAA/Glycine_rcpt"/>
</dbReference>
<dbReference type="InterPro" id="IPR008059">
    <property type="entry name" value="GABAAa_rho2_rcpt"/>
</dbReference>
<dbReference type="InterPro" id="IPR008057">
    <property type="entry name" value="GABAAa_rho_rcpt"/>
</dbReference>
<dbReference type="InterPro" id="IPR006202">
    <property type="entry name" value="Neur_chan_lig-bd"/>
</dbReference>
<dbReference type="InterPro" id="IPR036734">
    <property type="entry name" value="Neur_chan_lig-bd_sf"/>
</dbReference>
<dbReference type="InterPro" id="IPR006201">
    <property type="entry name" value="Neur_channel"/>
</dbReference>
<dbReference type="InterPro" id="IPR036719">
    <property type="entry name" value="Neuro-gated_channel_TM_sf"/>
</dbReference>
<dbReference type="InterPro" id="IPR038050">
    <property type="entry name" value="Neuro_actylchol_rec"/>
</dbReference>
<dbReference type="InterPro" id="IPR006029">
    <property type="entry name" value="Neurotrans-gated_channel_TM"/>
</dbReference>
<dbReference type="InterPro" id="IPR018000">
    <property type="entry name" value="Neurotransmitter_ion_chnl_CS"/>
</dbReference>
<dbReference type="NCBIfam" id="TIGR00860">
    <property type="entry name" value="LIC"/>
    <property type="match status" value="1"/>
</dbReference>
<dbReference type="PANTHER" id="PTHR18945">
    <property type="entry name" value="NEUROTRANSMITTER GATED ION CHANNEL"/>
    <property type="match status" value="1"/>
</dbReference>
<dbReference type="Pfam" id="PF02931">
    <property type="entry name" value="Neur_chan_LBD"/>
    <property type="match status" value="1"/>
</dbReference>
<dbReference type="Pfam" id="PF02932">
    <property type="entry name" value="Neur_chan_memb"/>
    <property type="match status" value="1"/>
</dbReference>
<dbReference type="PRINTS" id="PR00253">
    <property type="entry name" value="GABAARECEPTR"/>
</dbReference>
<dbReference type="PRINTS" id="PR01670">
    <property type="entry name" value="GABAARRHO"/>
</dbReference>
<dbReference type="PRINTS" id="PR01672">
    <property type="entry name" value="GABAARRHO2"/>
</dbReference>
<dbReference type="PRINTS" id="PR00252">
    <property type="entry name" value="NRIONCHANNEL"/>
</dbReference>
<dbReference type="SUPFAM" id="SSF90112">
    <property type="entry name" value="Neurotransmitter-gated ion-channel transmembrane pore"/>
    <property type="match status" value="1"/>
</dbReference>
<dbReference type="SUPFAM" id="SSF63712">
    <property type="entry name" value="Nicotinic receptor ligand binding domain-like"/>
    <property type="match status" value="1"/>
</dbReference>
<dbReference type="PROSITE" id="PS00236">
    <property type="entry name" value="NEUROTR_ION_CHANNEL"/>
    <property type="match status" value="1"/>
</dbReference>
<accession>P28476</accession>
<accession>A2BDE4</accession>
<accession>Q9H153</accession>
<name>GBRR2_HUMAN</name>
<proteinExistence type="evidence at transcript level"/>
<evidence type="ECO:0000250" key="1">
    <source>
        <dbReference type="UniProtKB" id="P24046"/>
    </source>
</evidence>
<evidence type="ECO:0000250" key="2">
    <source>
        <dbReference type="UniProtKB" id="P28472"/>
    </source>
</evidence>
<evidence type="ECO:0000250" key="3">
    <source>
        <dbReference type="UniProtKB" id="P47742"/>
    </source>
</evidence>
<evidence type="ECO:0000250" key="4">
    <source>
        <dbReference type="UniProtKB" id="P56476"/>
    </source>
</evidence>
<evidence type="ECO:0000255" key="5"/>
<evidence type="ECO:0000303" key="6">
    <source>
    </source>
</evidence>
<evidence type="ECO:0000305" key="7"/>
<evidence type="ECO:0000312" key="8">
    <source>
        <dbReference type="HGNC" id="HGNC:4091"/>
    </source>
</evidence>
<comment type="function">
    <text evidence="1 3 4">Rho subunit of the pentameric ligand-gated chloride channels responsible for mediating the effects of gamma-aminobutyric acid (GABA), the major inhibitory neurotransmitter in the brain (By similarity). Rho-containing GABA-gated chloride channels are a subclass of GABA(A) receptors (GABAARs) entirely composed of rho subunits, where GABA molecules bind at the rho intersubunit interfaces (By similarity). When activated by GABA, rho-GABAARs selectively allow the flow of chloride anions across the cell membrane down their electrochemical gradient (By similarity). Rho-2 GABAARs may contribute to the regulation of glial development in the cerebellum by controlling extrasynaptic transmission. Rho-2 GABAARs are also involved in neuronal tonic (extrasynaptic) and phasic (synaptic) transmission in the Purkinje neurons of the cerebellum (By similarity). Rho-2 GABAARs expressed in retina may play a role in retinal neurotransmission (By similarity).</text>
</comment>
<comment type="catalytic activity">
    <reaction evidence="3">
        <text>chloride(in) = chloride(out)</text>
        <dbReference type="Rhea" id="RHEA:29823"/>
        <dbReference type="ChEBI" id="CHEBI:17996"/>
    </reaction>
</comment>
<comment type="subunit">
    <text evidence="3">Three rho subunits (rho-1/GBRR1, rho-2/GBRR2 and rho-3/GBRR3) coassemble either to form functional homopentamers or heteropentamers (By similarity). Rho-2 is unable to form a functional homopentamer (By similarity). Interacts with SQSTM1 (By similarity).</text>
</comment>
<comment type="subcellular location">
    <subcellularLocation>
        <location evidence="4">Postsynaptic cell membrane</location>
        <topology evidence="5">Multi-pass membrane protein</topology>
    </subcellularLocation>
    <subcellularLocation>
        <location evidence="4">Cell membrane</location>
        <topology evidence="5">Multi-pass membrane protein</topology>
    </subcellularLocation>
</comment>
<comment type="alternative products">
    <event type="alternative initiation"/>
    <isoform>
        <id>P28476-1</id>
        <name>1</name>
        <sequence type="displayed"/>
    </isoform>
    <isoform>
        <id>P28476-2</id>
        <name>2</name>
        <sequence type="described" ref="VSP_044373"/>
    </isoform>
</comment>
<comment type="domain">
    <text evidence="1">GABAARs subunits share a common topological structure: a peptide sequence made up of a long extracellular N-terminal, four transmembrane domains, intracellular or cytoplasmic domain located between the third and the fourth transmembrane domains.</text>
</comment>
<comment type="miscellaneous">
    <molecule>Isoform 2</molecule>
    <text evidence="7">Isoform 2 could be translated from an upstream initiator ATG located in frame within the first coding exon. The probability of a signal peptide within this isoform is very low.</text>
</comment>
<comment type="similarity">
    <text evidence="7">Belongs to the ligand-gated ion channel (TC 1.A.9) family. Gamma-aminobutyric acid receptor (TC 1.A.9.5) subfamily. GABRR2 sub-subfamily.</text>
</comment>
<organism>
    <name type="scientific">Homo sapiens</name>
    <name type="common">Human</name>
    <dbReference type="NCBI Taxonomy" id="9606"/>
    <lineage>
        <taxon>Eukaryota</taxon>
        <taxon>Metazoa</taxon>
        <taxon>Chordata</taxon>
        <taxon>Craniata</taxon>
        <taxon>Vertebrata</taxon>
        <taxon>Euteleostomi</taxon>
        <taxon>Mammalia</taxon>
        <taxon>Eutheria</taxon>
        <taxon>Euarchontoglires</taxon>
        <taxon>Primates</taxon>
        <taxon>Haplorrhini</taxon>
        <taxon>Catarrhini</taxon>
        <taxon>Hominidae</taxon>
        <taxon>Homo</taxon>
    </lineage>
</organism>
<protein>
    <recommendedName>
        <fullName evidence="6">Gamma-aminobutyric acid receptor subunit rho-2</fullName>
    </recommendedName>
    <alternativeName>
        <fullName>GABA(A) receptor subunit rho-2</fullName>
        <shortName>GABAAR subunit rho-2</shortName>
    </alternativeName>
    <alternativeName>
        <fullName evidence="3">GABA(C) receptor</fullName>
    </alternativeName>
</protein>
<reference key="1">
    <citation type="journal article" date="1992" name="Genomics">
        <title>Identification of a putative gamma-aminobutyric acid (GABA) receptor subunit rho2 cDNA and colocalization of the genes encoding rho2 (GABRR2) and rho1 (GABRR1) to human chromosome 6q14-q21 and mouse chromosome 4.</title>
        <authorList>
            <person name="Cutting G.R."/>
            <person name="Curristin S."/>
            <person name="Zoghbi H."/>
            <person name="O'Hara B."/>
            <person name="Seldin M.F."/>
            <person name="Uhl G.R."/>
        </authorList>
    </citation>
    <scope>NUCLEOTIDE SEQUENCE [MRNA] (ISOFORM 1)</scope>
    <source>
        <tissue>Retina</tissue>
    </source>
</reference>
<reference key="2">
    <citation type="journal article" date="2003" name="Nature">
        <title>The DNA sequence and analysis of human chromosome 6.</title>
        <authorList>
            <person name="Mungall A.J."/>
            <person name="Palmer S.A."/>
            <person name="Sims S.K."/>
            <person name="Edwards C.A."/>
            <person name="Ashurst J.L."/>
            <person name="Wilming L."/>
            <person name="Jones M.C."/>
            <person name="Horton R."/>
            <person name="Hunt S.E."/>
            <person name="Scott C.E."/>
            <person name="Gilbert J.G.R."/>
            <person name="Clamp M.E."/>
            <person name="Bethel G."/>
            <person name="Milne S."/>
            <person name="Ainscough R."/>
            <person name="Almeida J.P."/>
            <person name="Ambrose K.D."/>
            <person name="Andrews T.D."/>
            <person name="Ashwell R.I.S."/>
            <person name="Babbage A.K."/>
            <person name="Bagguley C.L."/>
            <person name="Bailey J."/>
            <person name="Banerjee R."/>
            <person name="Barker D.J."/>
            <person name="Barlow K.F."/>
            <person name="Bates K."/>
            <person name="Beare D.M."/>
            <person name="Beasley H."/>
            <person name="Beasley O."/>
            <person name="Bird C.P."/>
            <person name="Blakey S.E."/>
            <person name="Bray-Allen S."/>
            <person name="Brook J."/>
            <person name="Brown A.J."/>
            <person name="Brown J.Y."/>
            <person name="Burford D.C."/>
            <person name="Burrill W."/>
            <person name="Burton J."/>
            <person name="Carder C."/>
            <person name="Carter N.P."/>
            <person name="Chapman J.C."/>
            <person name="Clark S.Y."/>
            <person name="Clark G."/>
            <person name="Clee C.M."/>
            <person name="Clegg S."/>
            <person name="Cobley V."/>
            <person name="Collier R.E."/>
            <person name="Collins J.E."/>
            <person name="Colman L.K."/>
            <person name="Corby N.R."/>
            <person name="Coville G.J."/>
            <person name="Culley K.M."/>
            <person name="Dhami P."/>
            <person name="Davies J."/>
            <person name="Dunn M."/>
            <person name="Earthrowl M.E."/>
            <person name="Ellington A.E."/>
            <person name="Evans K.A."/>
            <person name="Faulkner L."/>
            <person name="Francis M.D."/>
            <person name="Frankish A."/>
            <person name="Frankland J."/>
            <person name="French L."/>
            <person name="Garner P."/>
            <person name="Garnett J."/>
            <person name="Ghori M.J."/>
            <person name="Gilby L.M."/>
            <person name="Gillson C.J."/>
            <person name="Glithero R.J."/>
            <person name="Grafham D.V."/>
            <person name="Grant M."/>
            <person name="Gribble S."/>
            <person name="Griffiths C."/>
            <person name="Griffiths M.N.D."/>
            <person name="Hall R."/>
            <person name="Halls K.S."/>
            <person name="Hammond S."/>
            <person name="Harley J.L."/>
            <person name="Hart E.A."/>
            <person name="Heath P.D."/>
            <person name="Heathcott R."/>
            <person name="Holmes S.J."/>
            <person name="Howden P.J."/>
            <person name="Howe K.L."/>
            <person name="Howell G.R."/>
            <person name="Huckle E."/>
            <person name="Humphray S.J."/>
            <person name="Humphries M.D."/>
            <person name="Hunt A.R."/>
            <person name="Johnson C.M."/>
            <person name="Joy A.A."/>
            <person name="Kay M."/>
            <person name="Keenan S.J."/>
            <person name="Kimberley A.M."/>
            <person name="King A."/>
            <person name="Laird G.K."/>
            <person name="Langford C."/>
            <person name="Lawlor S."/>
            <person name="Leongamornlert D.A."/>
            <person name="Leversha M."/>
            <person name="Lloyd C.R."/>
            <person name="Lloyd D.M."/>
            <person name="Loveland J.E."/>
            <person name="Lovell J."/>
            <person name="Martin S."/>
            <person name="Mashreghi-Mohammadi M."/>
            <person name="Maslen G.L."/>
            <person name="Matthews L."/>
            <person name="McCann O.T."/>
            <person name="McLaren S.J."/>
            <person name="McLay K."/>
            <person name="McMurray A."/>
            <person name="Moore M.J.F."/>
            <person name="Mullikin J.C."/>
            <person name="Niblett D."/>
            <person name="Nickerson T."/>
            <person name="Novik K.L."/>
            <person name="Oliver K."/>
            <person name="Overton-Larty E.K."/>
            <person name="Parker A."/>
            <person name="Patel R."/>
            <person name="Pearce A.V."/>
            <person name="Peck A.I."/>
            <person name="Phillimore B.J.C.T."/>
            <person name="Phillips S."/>
            <person name="Plumb R.W."/>
            <person name="Porter K.M."/>
            <person name="Ramsey Y."/>
            <person name="Ranby S.A."/>
            <person name="Rice C.M."/>
            <person name="Ross M.T."/>
            <person name="Searle S.M."/>
            <person name="Sehra H.K."/>
            <person name="Sheridan E."/>
            <person name="Skuce C.D."/>
            <person name="Smith S."/>
            <person name="Smith M."/>
            <person name="Spraggon L."/>
            <person name="Squares S.L."/>
            <person name="Steward C.A."/>
            <person name="Sycamore N."/>
            <person name="Tamlyn-Hall G."/>
            <person name="Tester J."/>
            <person name="Theaker A.J."/>
            <person name="Thomas D.W."/>
            <person name="Thorpe A."/>
            <person name="Tracey A."/>
            <person name="Tromans A."/>
            <person name="Tubby B."/>
            <person name="Wall M."/>
            <person name="Wallis J.M."/>
            <person name="West A.P."/>
            <person name="White S.S."/>
            <person name="Whitehead S.L."/>
            <person name="Whittaker H."/>
            <person name="Wild A."/>
            <person name="Willey D.J."/>
            <person name="Wilmer T.E."/>
            <person name="Wood J.M."/>
            <person name="Wray P.W."/>
            <person name="Wyatt J.C."/>
            <person name="Young L."/>
            <person name="Younger R.M."/>
            <person name="Bentley D.R."/>
            <person name="Coulson A."/>
            <person name="Durbin R.M."/>
            <person name="Hubbard T."/>
            <person name="Sulston J.E."/>
            <person name="Dunham I."/>
            <person name="Rogers J."/>
            <person name="Beck S."/>
        </authorList>
    </citation>
    <scope>NUCLEOTIDE SEQUENCE [LARGE SCALE GENOMIC DNA]</scope>
</reference>
<reference key="3">
    <citation type="journal article" date="2004" name="Genome Res.">
        <title>The status, quality, and expansion of the NIH full-length cDNA project: the Mammalian Gene Collection (MGC).</title>
        <authorList>
            <consortium name="The MGC Project Team"/>
        </authorList>
    </citation>
    <scope>NUCLEOTIDE SEQUENCE [LARGE SCALE MRNA] (ISOFORM 1)</scope>
</reference>
<gene>
    <name evidence="8" type="primary">GABRR2</name>
</gene>